<keyword id="KW-0067">ATP-binding</keyword>
<keyword id="KW-0418">Kinase</keyword>
<keyword id="KW-0460">Magnesium</keyword>
<keyword id="KW-0479">Metal-binding</keyword>
<keyword id="KW-0547">Nucleotide-binding</keyword>
<keyword id="KW-0711">Selenium</keyword>
<keyword id="KW-0712">Selenocysteine</keyword>
<keyword id="KW-0808">Transferase</keyword>
<feature type="chain" id="PRO_0000318673" description="Selenide, water dikinase">
    <location>
        <begin position="1"/>
        <end position="347"/>
    </location>
</feature>
<feature type="active site" evidence="2">
    <location>
        <position position="17"/>
    </location>
</feature>
<feature type="binding site" description="in other chain" evidence="2">
    <location>
        <position position="20"/>
    </location>
    <ligand>
        <name>ATP</name>
        <dbReference type="ChEBI" id="CHEBI:30616"/>
        <note>ligand shared between dimeric partners</note>
    </ligand>
</feature>
<feature type="binding site" description="in other chain" evidence="2">
    <location>
        <begin position="48"/>
        <end position="50"/>
    </location>
    <ligand>
        <name>ATP</name>
        <dbReference type="ChEBI" id="CHEBI:30616"/>
        <note>ligand shared between dimeric partners</note>
    </ligand>
</feature>
<feature type="binding site" evidence="2">
    <location>
        <position position="51"/>
    </location>
    <ligand>
        <name>Mg(2+)</name>
        <dbReference type="ChEBI" id="CHEBI:18420"/>
    </ligand>
</feature>
<feature type="binding site" description="in other chain" evidence="2">
    <location>
        <position position="68"/>
    </location>
    <ligand>
        <name>ATP</name>
        <dbReference type="ChEBI" id="CHEBI:30616"/>
        <note>ligand shared between dimeric partners</note>
    </ligand>
</feature>
<feature type="binding site" description="in other chain" evidence="2">
    <location>
        <position position="91"/>
    </location>
    <ligand>
        <name>ATP</name>
        <dbReference type="ChEBI" id="CHEBI:30616"/>
        <note>ligand shared between dimeric partners</note>
    </ligand>
</feature>
<feature type="binding site" evidence="2">
    <location>
        <position position="91"/>
    </location>
    <ligand>
        <name>Mg(2+)</name>
        <dbReference type="ChEBI" id="CHEBI:18420"/>
    </ligand>
</feature>
<feature type="binding site" evidence="2">
    <location>
        <begin position="139"/>
        <end position="141"/>
    </location>
    <ligand>
        <name>ATP</name>
        <dbReference type="ChEBI" id="CHEBI:30616"/>
        <note>ligand shared between dimeric partners</note>
    </ligand>
</feature>
<feature type="binding site" evidence="2">
    <location>
        <position position="227"/>
    </location>
    <ligand>
        <name>Mg(2+)</name>
        <dbReference type="ChEBI" id="CHEBI:18420"/>
    </ligand>
</feature>
<feature type="site" description="Important for catalytic activity" evidence="2">
    <location>
        <position position="20"/>
    </location>
</feature>
<feature type="non-standard amino acid" description="Selenocysteine" evidence="1">
    <location>
        <position position="17"/>
    </location>
</feature>
<evidence type="ECO:0000255" key="1"/>
<evidence type="ECO:0000255" key="2">
    <source>
        <dbReference type="HAMAP-Rule" id="MF_00625"/>
    </source>
</evidence>
<evidence type="ECO:0000305" key="3"/>
<name>SELD_HAEI8</name>
<gene>
    <name evidence="2" type="primary">selD</name>
    <name type="ordered locus">NTHI0297</name>
</gene>
<organism>
    <name type="scientific">Haemophilus influenzae (strain 86-028NP)</name>
    <dbReference type="NCBI Taxonomy" id="281310"/>
    <lineage>
        <taxon>Bacteria</taxon>
        <taxon>Pseudomonadati</taxon>
        <taxon>Pseudomonadota</taxon>
        <taxon>Gammaproteobacteria</taxon>
        <taxon>Pasteurellales</taxon>
        <taxon>Pasteurellaceae</taxon>
        <taxon>Haemophilus</taxon>
    </lineage>
</organism>
<reference key="1">
    <citation type="journal article" date="2005" name="J. Bacteriol.">
        <title>Genomic sequence of an otitis media isolate of nontypeable Haemophilus influenzae: comparative study with H. influenzae serotype d, strain KW20.</title>
        <authorList>
            <person name="Harrison A."/>
            <person name="Dyer D.W."/>
            <person name="Gillaspy A."/>
            <person name="Ray W.C."/>
            <person name="Mungur R."/>
            <person name="Carson M.B."/>
            <person name="Zhong H."/>
            <person name="Gipson J."/>
            <person name="Gipson M."/>
            <person name="Johnson L.S."/>
            <person name="Lewis L."/>
            <person name="Bakaletz L.O."/>
            <person name="Munson R.S. Jr."/>
        </authorList>
    </citation>
    <scope>NUCLEOTIDE SEQUENCE [LARGE SCALE GENOMIC DNA]</scope>
    <source>
        <strain>86-028NP</strain>
    </source>
</reference>
<dbReference type="EC" id="2.7.9.3" evidence="2"/>
<dbReference type="EMBL" id="CP000057">
    <property type="protein sequence ID" value="AAX87257.1"/>
    <property type="status" value="ALT_SEQ"/>
    <property type="molecule type" value="Genomic_DNA"/>
</dbReference>
<dbReference type="KEGG" id="hit:NTHI0297"/>
<dbReference type="HOGENOM" id="CLU_032859_0_1_6"/>
<dbReference type="Proteomes" id="UP000002525">
    <property type="component" value="Chromosome"/>
</dbReference>
<dbReference type="GO" id="GO:0005737">
    <property type="term" value="C:cytoplasm"/>
    <property type="evidence" value="ECO:0007669"/>
    <property type="project" value="TreeGrafter"/>
</dbReference>
<dbReference type="GO" id="GO:0005524">
    <property type="term" value="F:ATP binding"/>
    <property type="evidence" value="ECO:0007669"/>
    <property type="project" value="UniProtKB-UniRule"/>
</dbReference>
<dbReference type="GO" id="GO:0000287">
    <property type="term" value="F:magnesium ion binding"/>
    <property type="evidence" value="ECO:0007669"/>
    <property type="project" value="UniProtKB-UniRule"/>
</dbReference>
<dbReference type="GO" id="GO:0004756">
    <property type="term" value="F:selenide, water dikinase activity"/>
    <property type="evidence" value="ECO:0007669"/>
    <property type="project" value="UniProtKB-UniRule"/>
</dbReference>
<dbReference type="GO" id="GO:0016260">
    <property type="term" value="P:selenocysteine biosynthetic process"/>
    <property type="evidence" value="ECO:0007669"/>
    <property type="project" value="InterPro"/>
</dbReference>
<dbReference type="CDD" id="cd02195">
    <property type="entry name" value="SelD"/>
    <property type="match status" value="1"/>
</dbReference>
<dbReference type="FunFam" id="3.30.1330.10:FF:000003">
    <property type="entry name" value="Selenide, water dikinase"/>
    <property type="match status" value="1"/>
</dbReference>
<dbReference type="FunFam" id="3.90.650.10:FF:000004">
    <property type="entry name" value="Selenide, water dikinase"/>
    <property type="match status" value="1"/>
</dbReference>
<dbReference type="Gene3D" id="3.90.650.10">
    <property type="entry name" value="PurM-like C-terminal domain"/>
    <property type="match status" value="1"/>
</dbReference>
<dbReference type="Gene3D" id="3.30.1330.10">
    <property type="entry name" value="PurM-like, N-terminal domain"/>
    <property type="match status" value="1"/>
</dbReference>
<dbReference type="HAMAP" id="MF_00625">
    <property type="entry name" value="SelD"/>
    <property type="match status" value="1"/>
</dbReference>
<dbReference type="InterPro" id="IPR010918">
    <property type="entry name" value="PurM-like_C_dom"/>
</dbReference>
<dbReference type="InterPro" id="IPR036676">
    <property type="entry name" value="PurM-like_C_sf"/>
</dbReference>
<dbReference type="InterPro" id="IPR016188">
    <property type="entry name" value="PurM-like_N"/>
</dbReference>
<dbReference type="InterPro" id="IPR036921">
    <property type="entry name" value="PurM-like_N_sf"/>
</dbReference>
<dbReference type="InterPro" id="IPR023061">
    <property type="entry name" value="SelD_I"/>
</dbReference>
<dbReference type="InterPro" id="IPR004536">
    <property type="entry name" value="SPS/SelD"/>
</dbReference>
<dbReference type="NCBIfam" id="NF002098">
    <property type="entry name" value="PRK00943.1"/>
    <property type="match status" value="1"/>
</dbReference>
<dbReference type="NCBIfam" id="TIGR00476">
    <property type="entry name" value="selD"/>
    <property type="match status" value="1"/>
</dbReference>
<dbReference type="PANTHER" id="PTHR10256:SF0">
    <property type="entry name" value="INACTIVE SELENIDE, WATER DIKINASE-LIKE PROTEIN-RELATED"/>
    <property type="match status" value="1"/>
</dbReference>
<dbReference type="PANTHER" id="PTHR10256">
    <property type="entry name" value="SELENIDE, WATER DIKINASE"/>
    <property type="match status" value="1"/>
</dbReference>
<dbReference type="Pfam" id="PF00586">
    <property type="entry name" value="AIRS"/>
    <property type="match status" value="1"/>
</dbReference>
<dbReference type="Pfam" id="PF02769">
    <property type="entry name" value="AIRS_C"/>
    <property type="match status" value="1"/>
</dbReference>
<dbReference type="PIRSF" id="PIRSF036407">
    <property type="entry name" value="Selenphspht_syn"/>
    <property type="match status" value="1"/>
</dbReference>
<dbReference type="SUPFAM" id="SSF56042">
    <property type="entry name" value="PurM C-terminal domain-like"/>
    <property type="match status" value="1"/>
</dbReference>
<dbReference type="SUPFAM" id="SSF55326">
    <property type="entry name" value="PurM N-terminal domain-like"/>
    <property type="match status" value="1"/>
</dbReference>
<accession>Q4QNZ0</accession>
<protein>
    <recommendedName>
        <fullName evidence="2">Selenide, water dikinase</fullName>
        <ecNumber evidence="2">2.7.9.3</ecNumber>
    </recommendedName>
    <alternativeName>
        <fullName evidence="2">Selenium donor protein</fullName>
    </alternativeName>
    <alternativeName>
        <fullName evidence="2">Selenophosphate synthase</fullName>
    </alternativeName>
</protein>
<sequence length="347" mass="36454">MAEEPIRLTQYSHGAGUGCKISPKVLGTILHSELEKFYDPNLLVGNETADDAAVYDLGNGTAIISTTDFFMPIVDDPFDFGRIAATNAISDIFAMGGKPIMGIAILGFPTNVLPAEVAQKIVDGGRFACHQAGIALAGGHSIDSPEPIFGLAVTGVIDTEKVKRNASAKSGCKLYMTKPLGIGILTTAEKKGKLKPEHQGLATAAMCQMNSIGSQFSQVDGVTAMTDVTGFGLLGHLIEICEGSNLSAVVFSDKIKTLDGVKDYIAQGCVPGGTGRNFESYGHKVGALTEEQKAILCDPQTSGGLLVAVEPNSVQTIIEIAKDTGIDLYEVGKLKPKSESDIVVEVK</sequence>
<proteinExistence type="inferred from homology"/>
<comment type="function">
    <text evidence="2">Synthesizes selenophosphate from selenide and ATP.</text>
</comment>
<comment type="catalytic activity">
    <reaction evidence="2">
        <text>hydrogenselenide + ATP + H2O = selenophosphate + AMP + phosphate + 2 H(+)</text>
        <dbReference type="Rhea" id="RHEA:18737"/>
        <dbReference type="ChEBI" id="CHEBI:15377"/>
        <dbReference type="ChEBI" id="CHEBI:15378"/>
        <dbReference type="ChEBI" id="CHEBI:16144"/>
        <dbReference type="ChEBI" id="CHEBI:29317"/>
        <dbReference type="ChEBI" id="CHEBI:30616"/>
        <dbReference type="ChEBI" id="CHEBI:43474"/>
        <dbReference type="ChEBI" id="CHEBI:456215"/>
        <dbReference type="EC" id="2.7.9.3"/>
    </reaction>
</comment>
<comment type="cofactor">
    <cofactor evidence="2">
        <name>Mg(2+)</name>
        <dbReference type="ChEBI" id="CHEBI:18420"/>
    </cofactor>
    <text evidence="2">Binds 1 Mg(2+) ion per monomer.</text>
</comment>
<comment type="subunit">
    <text evidence="2">Homodimer.</text>
</comment>
<comment type="similarity">
    <text evidence="2">Belongs to the selenophosphate synthase 1 family. Class I subfamily.</text>
</comment>
<comment type="sequence caution" evidence="3">
    <conflict type="erroneous termination">
        <sequence resource="EMBL-CDS" id="AAX87257"/>
    </conflict>
    <text>Truncated C-terminus.</text>
</comment>